<sequence length="234" mass="25383">MKIIVVKNASELGKQAFDLLAKAVDEGAKTLGLATGSSPVELYQEIVASQLDFSQMTSVNLDEYVGLSPENPQSYHYFMNQHLFQYKPFKRSYLPDGQTKDIQAECGRYNQILAENPVDLQVLGIGQNGHIAFNEPGTPFDSVTHEVALTESTIKANARFFNSIDEVPKSAICMGIANIMAAKEIVLLAKGESKAKAIKDMVEGPVTTDVPASVLQKHPNVTVIADQAAASLLK</sequence>
<evidence type="ECO:0000255" key="1">
    <source>
        <dbReference type="HAMAP-Rule" id="MF_01241"/>
    </source>
</evidence>
<feature type="chain" id="PRO_1000066992" description="Glucosamine-6-phosphate deaminase">
    <location>
        <begin position="1"/>
        <end position="234"/>
    </location>
</feature>
<feature type="active site" description="Proton acceptor; for enolization step" evidence="1">
    <location>
        <position position="62"/>
    </location>
</feature>
<feature type="active site" description="For ring-opening step" evidence="1">
    <location>
        <position position="128"/>
    </location>
</feature>
<feature type="active site" description="Proton acceptor; for ring-opening step" evidence="1">
    <location>
        <position position="130"/>
    </location>
</feature>
<feature type="active site" description="For ring-opening step" evidence="1">
    <location>
        <position position="135"/>
    </location>
</feature>
<dbReference type="EC" id="3.5.99.6" evidence="1"/>
<dbReference type="EMBL" id="CR954253">
    <property type="protein sequence ID" value="CAI98914.1"/>
    <property type="molecule type" value="Genomic_DNA"/>
</dbReference>
<dbReference type="RefSeq" id="WP_011544358.1">
    <property type="nucleotide sequence ID" value="NZ_JQAV01000015.1"/>
</dbReference>
<dbReference type="SMR" id="Q1G817"/>
<dbReference type="STRING" id="390333.Ldb2190"/>
<dbReference type="KEGG" id="ldb:Ldb2190"/>
<dbReference type="eggNOG" id="COG0363">
    <property type="taxonomic scope" value="Bacteria"/>
</dbReference>
<dbReference type="HOGENOM" id="CLU_049611_1_0_9"/>
<dbReference type="BioCyc" id="LDEL390333:LDB_RS09545-MONOMER"/>
<dbReference type="UniPathway" id="UPA00629">
    <property type="reaction ID" value="UER00684"/>
</dbReference>
<dbReference type="Proteomes" id="UP000001259">
    <property type="component" value="Chromosome"/>
</dbReference>
<dbReference type="GO" id="GO:0005737">
    <property type="term" value="C:cytoplasm"/>
    <property type="evidence" value="ECO:0007669"/>
    <property type="project" value="TreeGrafter"/>
</dbReference>
<dbReference type="GO" id="GO:0004342">
    <property type="term" value="F:glucosamine-6-phosphate deaminase activity"/>
    <property type="evidence" value="ECO:0007669"/>
    <property type="project" value="UniProtKB-UniRule"/>
</dbReference>
<dbReference type="GO" id="GO:0042802">
    <property type="term" value="F:identical protein binding"/>
    <property type="evidence" value="ECO:0007669"/>
    <property type="project" value="TreeGrafter"/>
</dbReference>
<dbReference type="GO" id="GO:0005975">
    <property type="term" value="P:carbohydrate metabolic process"/>
    <property type="evidence" value="ECO:0007669"/>
    <property type="project" value="InterPro"/>
</dbReference>
<dbReference type="GO" id="GO:0006043">
    <property type="term" value="P:glucosamine catabolic process"/>
    <property type="evidence" value="ECO:0007669"/>
    <property type="project" value="TreeGrafter"/>
</dbReference>
<dbReference type="GO" id="GO:0006046">
    <property type="term" value="P:N-acetylglucosamine catabolic process"/>
    <property type="evidence" value="ECO:0007669"/>
    <property type="project" value="TreeGrafter"/>
</dbReference>
<dbReference type="GO" id="GO:0019262">
    <property type="term" value="P:N-acetylneuraminate catabolic process"/>
    <property type="evidence" value="ECO:0007669"/>
    <property type="project" value="UniProtKB-UniRule"/>
</dbReference>
<dbReference type="CDD" id="cd01399">
    <property type="entry name" value="GlcN6P_deaminase"/>
    <property type="match status" value="1"/>
</dbReference>
<dbReference type="FunFam" id="3.40.50.1360:FF:000003">
    <property type="entry name" value="Glucosamine-6-phosphate deaminase"/>
    <property type="match status" value="1"/>
</dbReference>
<dbReference type="Gene3D" id="3.40.50.1360">
    <property type="match status" value="1"/>
</dbReference>
<dbReference type="HAMAP" id="MF_01241">
    <property type="entry name" value="GlcN6P_deamin"/>
    <property type="match status" value="1"/>
</dbReference>
<dbReference type="InterPro" id="IPR006148">
    <property type="entry name" value="Glc/Gal-6P_isomerase"/>
</dbReference>
<dbReference type="InterPro" id="IPR004547">
    <property type="entry name" value="Glucosamine6P_isomerase"/>
</dbReference>
<dbReference type="InterPro" id="IPR018321">
    <property type="entry name" value="Glucosamine6P_isomerase_CS"/>
</dbReference>
<dbReference type="InterPro" id="IPR037171">
    <property type="entry name" value="NagB/RpiA_transferase-like"/>
</dbReference>
<dbReference type="NCBIfam" id="TIGR00502">
    <property type="entry name" value="nagB"/>
    <property type="match status" value="1"/>
</dbReference>
<dbReference type="PANTHER" id="PTHR11280">
    <property type="entry name" value="GLUCOSAMINE-6-PHOSPHATE ISOMERASE"/>
    <property type="match status" value="1"/>
</dbReference>
<dbReference type="PANTHER" id="PTHR11280:SF5">
    <property type="entry name" value="GLUCOSAMINE-6-PHOSPHATE ISOMERASE"/>
    <property type="match status" value="1"/>
</dbReference>
<dbReference type="Pfam" id="PF01182">
    <property type="entry name" value="Glucosamine_iso"/>
    <property type="match status" value="1"/>
</dbReference>
<dbReference type="SUPFAM" id="SSF100950">
    <property type="entry name" value="NagB/RpiA/CoA transferase-like"/>
    <property type="match status" value="1"/>
</dbReference>
<dbReference type="PROSITE" id="PS01161">
    <property type="entry name" value="GLC_GALNAC_ISOMERASE"/>
    <property type="match status" value="1"/>
</dbReference>
<protein>
    <recommendedName>
        <fullName evidence="1">Glucosamine-6-phosphate deaminase</fullName>
        <ecNumber evidence="1">3.5.99.6</ecNumber>
    </recommendedName>
    <alternativeName>
        <fullName evidence="1">GlcN6P deaminase</fullName>
        <shortName evidence="1">GNPDA</shortName>
    </alternativeName>
    <alternativeName>
        <fullName evidence="1">Glucosamine-6-phosphate isomerase</fullName>
    </alternativeName>
</protein>
<comment type="function">
    <text evidence="1">Catalyzes the reversible isomerization-deamination of glucosamine 6-phosphate (GlcN6P) to form fructose 6-phosphate (Fru6P) and ammonium ion.</text>
</comment>
<comment type="catalytic activity">
    <reaction evidence="1">
        <text>alpha-D-glucosamine 6-phosphate + H2O = beta-D-fructose 6-phosphate + NH4(+)</text>
        <dbReference type="Rhea" id="RHEA:12172"/>
        <dbReference type="ChEBI" id="CHEBI:15377"/>
        <dbReference type="ChEBI" id="CHEBI:28938"/>
        <dbReference type="ChEBI" id="CHEBI:57634"/>
        <dbReference type="ChEBI" id="CHEBI:75989"/>
        <dbReference type="EC" id="3.5.99.6"/>
    </reaction>
</comment>
<comment type="pathway">
    <text evidence="1">Amino-sugar metabolism; N-acetylneuraminate degradation; D-fructose 6-phosphate from N-acetylneuraminate: step 5/5.</text>
</comment>
<comment type="similarity">
    <text evidence="1">Belongs to the glucosamine/galactosamine-6-phosphate isomerase family. NagB subfamily.</text>
</comment>
<keyword id="KW-0119">Carbohydrate metabolism</keyword>
<keyword id="KW-0378">Hydrolase</keyword>
<keyword id="KW-1185">Reference proteome</keyword>
<accession>Q1G817</accession>
<reference key="1">
    <citation type="journal article" date="2006" name="Proc. Natl. Acad. Sci. U.S.A.">
        <title>The complete genome sequence of Lactobacillus bulgaricus reveals extensive and ongoing reductive evolution.</title>
        <authorList>
            <person name="van de Guchte M."/>
            <person name="Penaud S."/>
            <person name="Grimaldi C."/>
            <person name="Barbe V."/>
            <person name="Bryson K."/>
            <person name="Nicolas P."/>
            <person name="Robert C."/>
            <person name="Oztas S."/>
            <person name="Mangenot S."/>
            <person name="Couloux A."/>
            <person name="Loux V."/>
            <person name="Dervyn R."/>
            <person name="Bossy R."/>
            <person name="Bolotin A."/>
            <person name="Batto J.-M."/>
            <person name="Walunas T."/>
            <person name="Gibrat J.-F."/>
            <person name="Bessieres P."/>
            <person name="Weissenbach J."/>
            <person name="Ehrlich S.D."/>
            <person name="Maguin E."/>
        </authorList>
    </citation>
    <scope>NUCLEOTIDE SEQUENCE [LARGE SCALE GENOMIC DNA]</scope>
    <source>
        <strain>ATCC 11842 / DSM 20081 / BCRC 10696 / JCM 1002 / NBRC 13953 / NCIMB 11778 / NCTC 12712 / WDCM 00102 / Lb 14</strain>
    </source>
</reference>
<organism>
    <name type="scientific">Lactobacillus delbrueckii subsp. bulgaricus (strain ATCC 11842 / DSM 20081 / BCRC 10696 / JCM 1002 / NBRC 13953 / NCIMB 11778 / NCTC 12712 / WDCM 00102 / Lb 14)</name>
    <dbReference type="NCBI Taxonomy" id="390333"/>
    <lineage>
        <taxon>Bacteria</taxon>
        <taxon>Bacillati</taxon>
        <taxon>Bacillota</taxon>
        <taxon>Bacilli</taxon>
        <taxon>Lactobacillales</taxon>
        <taxon>Lactobacillaceae</taxon>
        <taxon>Lactobacillus</taxon>
    </lineage>
</organism>
<gene>
    <name evidence="1" type="primary">nagB</name>
    <name type="ordered locus">Ldb2190</name>
</gene>
<name>NAGB_LACDA</name>
<proteinExistence type="inferred from homology"/>